<accession>A6NDL8</accession>
<comment type="function">
    <text evidence="3">Odorant receptor.</text>
</comment>
<comment type="subcellular location">
    <subcellularLocation>
        <location>Cell membrane</location>
        <topology>Multi-pass membrane protein</topology>
    </subcellularLocation>
</comment>
<comment type="similarity">
    <text evidence="2">Belongs to the G-protein coupled receptor 1 family.</text>
</comment>
<comment type="sequence caution" evidence="3">
    <conflict type="erroneous initiation">
        <sequence resource="EMBL-CDS" id="EAW96814"/>
    </conflict>
</comment>
<comment type="online information" name="Human Olfactory Receptor Data Exploratorium (HORDE)">
    <link uri="http://genome.weizmann.ac.il/horde/card/index/symbol:OR6C68"/>
</comment>
<feature type="chain" id="PRO_0000309618" description="Olfactory receptor 6C68">
    <location>
        <begin position="1"/>
        <end position="312"/>
    </location>
</feature>
<feature type="topological domain" description="Extracellular" evidence="1">
    <location>
        <begin position="1"/>
        <end position="23"/>
    </location>
</feature>
<feature type="transmembrane region" description="Helical; Name=1" evidence="1">
    <location>
        <begin position="24"/>
        <end position="44"/>
    </location>
</feature>
<feature type="topological domain" description="Cytoplasmic" evidence="1">
    <location>
        <begin position="45"/>
        <end position="55"/>
    </location>
</feature>
<feature type="transmembrane region" description="Helical; Name=2" evidence="1">
    <location>
        <begin position="56"/>
        <end position="76"/>
    </location>
</feature>
<feature type="topological domain" description="Extracellular" evidence="1">
    <location>
        <begin position="77"/>
        <end position="95"/>
    </location>
</feature>
<feature type="transmembrane region" description="Helical; Name=3" evidence="1">
    <location>
        <begin position="96"/>
        <end position="116"/>
    </location>
</feature>
<feature type="topological domain" description="Cytoplasmic" evidence="1">
    <location>
        <begin position="117"/>
        <end position="143"/>
    </location>
</feature>
<feature type="transmembrane region" description="Helical; Name=4" evidence="1">
    <location>
        <begin position="144"/>
        <end position="164"/>
    </location>
</feature>
<feature type="topological domain" description="Extracellular" evidence="1">
    <location>
        <begin position="165"/>
        <end position="197"/>
    </location>
</feature>
<feature type="transmembrane region" description="Helical; Name=5" evidence="1">
    <location>
        <begin position="198"/>
        <end position="218"/>
    </location>
</feature>
<feature type="topological domain" description="Cytoplasmic" evidence="1">
    <location>
        <begin position="219"/>
        <end position="239"/>
    </location>
</feature>
<feature type="transmembrane region" description="Helical; Name=6" evidence="1">
    <location>
        <begin position="240"/>
        <end position="260"/>
    </location>
</feature>
<feature type="topological domain" description="Extracellular" evidence="1">
    <location>
        <begin position="261"/>
        <end position="271"/>
    </location>
</feature>
<feature type="transmembrane region" description="Helical; Name=7" evidence="1">
    <location>
        <begin position="272"/>
        <end position="292"/>
    </location>
</feature>
<feature type="topological domain" description="Cytoplasmic" evidence="1">
    <location>
        <begin position="293"/>
        <end position="312"/>
    </location>
</feature>
<feature type="disulfide bond" evidence="2">
    <location>
        <begin position="95"/>
        <end position="177"/>
    </location>
</feature>
<evidence type="ECO:0000255" key="1"/>
<evidence type="ECO:0000255" key="2">
    <source>
        <dbReference type="PROSITE-ProRule" id="PRU00521"/>
    </source>
</evidence>
<evidence type="ECO:0000305" key="3"/>
<sequence length="312" mass="35296">MRKHTAITTFILLGLTEDPQLQVLLFMFLFITYMLSVTGKLTIIALTMLDPHLKTPMYFFLQNLSFLEISFTATCVPRFLYSISTGNKIITYNACVIQLFFADLFGVTEFFLLATMSYDRYVAICKPLHYMAIMSNKVCKTMVICCWMAALMIILPPLSLGFHLEFCDSNVINHFGCDALPILKIPCSDTSLIEQMVVASAVLTFIITLVCVVLSYTYIIRTILKFPSVQQKKKAFSTCSSHITVVSITYGSCIFIYIKPSAKEEVNINKGVSVLISSISPMLNSFIYTLRNEQVKQAFHDSLKKIAFRLKK</sequence>
<keyword id="KW-1003">Cell membrane</keyword>
<keyword id="KW-1015">Disulfide bond</keyword>
<keyword id="KW-0297">G-protein coupled receptor</keyword>
<keyword id="KW-0472">Membrane</keyword>
<keyword id="KW-0552">Olfaction</keyword>
<keyword id="KW-0675">Receptor</keyword>
<keyword id="KW-1185">Reference proteome</keyword>
<keyword id="KW-0716">Sensory transduction</keyword>
<keyword id="KW-0807">Transducer</keyword>
<keyword id="KW-0812">Transmembrane</keyword>
<keyword id="KW-1133">Transmembrane helix</keyword>
<proteinExistence type="inferred from homology"/>
<gene>
    <name type="primary">OR6C68</name>
</gene>
<protein>
    <recommendedName>
        <fullName>Olfactory receptor 6C68</fullName>
    </recommendedName>
</protein>
<organism>
    <name type="scientific">Homo sapiens</name>
    <name type="common">Human</name>
    <dbReference type="NCBI Taxonomy" id="9606"/>
    <lineage>
        <taxon>Eukaryota</taxon>
        <taxon>Metazoa</taxon>
        <taxon>Chordata</taxon>
        <taxon>Craniata</taxon>
        <taxon>Vertebrata</taxon>
        <taxon>Euteleostomi</taxon>
        <taxon>Mammalia</taxon>
        <taxon>Eutheria</taxon>
        <taxon>Euarchontoglires</taxon>
        <taxon>Primates</taxon>
        <taxon>Haplorrhini</taxon>
        <taxon>Catarrhini</taxon>
        <taxon>Hominidae</taxon>
        <taxon>Homo</taxon>
    </lineage>
</organism>
<reference key="1">
    <citation type="journal article" date="2006" name="Nature">
        <title>The finished DNA sequence of human chromosome 12.</title>
        <authorList>
            <person name="Scherer S.E."/>
            <person name="Muzny D.M."/>
            <person name="Buhay C.J."/>
            <person name="Chen R."/>
            <person name="Cree A."/>
            <person name="Ding Y."/>
            <person name="Dugan-Rocha S."/>
            <person name="Gill R."/>
            <person name="Gunaratne P."/>
            <person name="Harris R.A."/>
            <person name="Hawes A.C."/>
            <person name="Hernandez J."/>
            <person name="Hodgson A.V."/>
            <person name="Hume J."/>
            <person name="Jackson A."/>
            <person name="Khan Z.M."/>
            <person name="Kovar-Smith C."/>
            <person name="Lewis L.R."/>
            <person name="Lozado R.J."/>
            <person name="Metzker M.L."/>
            <person name="Milosavljevic A."/>
            <person name="Miner G.R."/>
            <person name="Montgomery K.T."/>
            <person name="Morgan M.B."/>
            <person name="Nazareth L.V."/>
            <person name="Scott G."/>
            <person name="Sodergren E."/>
            <person name="Song X.-Z."/>
            <person name="Steffen D."/>
            <person name="Lovering R.C."/>
            <person name="Wheeler D.A."/>
            <person name="Worley K.C."/>
            <person name="Yuan Y."/>
            <person name="Zhang Z."/>
            <person name="Adams C.Q."/>
            <person name="Ansari-Lari M.A."/>
            <person name="Ayele M."/>
            <person name="Brown M.J."/>
            <person name="Chen G."/>
            <person name="Chen Z."/>
            <person name="Clerc-Blankenburg K.P."/>
            <person name="Davis C."/>
            <person name="Delgado O."/>
            <person name="Dinh H.H."/>
            <person name="Draper H."/>
            <person name="Gonzalez-Garay M.L."/>
            <person name="Havlak P."/>
            <person name="Jackson L.R."/>
            <person name="Jacob L.S."/>
            <person name="Kelly S.H."/>
            <person name="Li L."/>
            <person name="Li Z."/>
            <person name="Liu J."/>
            <person name="Liu W."/>
            <person name="Lu J."/>
            <person name="Maheshwari M."/>
            <person name="Nguyen B.-V."/>
            <person name="Okwuonu G.O."/>
            <person name="Pasternak S."/>
            <person name="Perez L.M."/>
            <person name="Plopper F.J.H."/>
            <person name="Santibanez J."/>
            <person name="Shen H."/>
            <person name="Tabor P.E."/>
            <person name="Verduzco D."/>
            <person name="Waldron L."/>
            <person name="Wang Q."/>
            <person name="Williams G.A."/>
            <person name="Zhang J."/>
            <person name="Zhou J."/>
            <person name="Allen C.C."/>
            <person name="Amin A.G."/>
            <person name="Anyalebechi V."/>
            <person name="Bailey M."/>
            <person name="Barbaria J.A."/>
            <person name="Bimage K.E."/>
            <person name="Bryant N.P."/>
            <person name="Burch P.E."/>
            <person name="Burkett C.E."/>
            <person name="Burrell K.L."/>
            <person name="Calderon E."/>
            <person name="Cardenas V."/>
            <person name="Carter K."/>
            <person name="Casias K."/>
            <person name="Cavazos I."/>
            <person name="Cavazos S.R."/>
            <person name="Ceasar H."/>
            <person name="Chacko J."/>
            <person name="Chan S.N."/>
            <person name="Chavez D."/>
            <person name="Christopoulos C."/>
            <person name="Chu J."/>
            <person name="Cockrell R."/>
            <person name="Cox C.D."/>
            <person name="Dang M."/>
            <person name="Dathorne S.R."/>
            <person name="David R."/>
            <person name="Davis C.M."/>
            <person name="Davy-Carroll L."/>
            <person name="Deshazo D.R."/>
            <person name="Donlin J.E."/>
            <person name="D'Souza L."/>
            <person name="Eaves K.A."/>
            <person name="Egan A."/>
            <person name="Emery-Cohen A.J."/>
            <person name="Escotto M."/>
            <person name="Flagg N."/>
            <person name="Forbes L.D."/>
            <person name="Gabisi A.M."/>
            <person name="Garza M."/>
            <person name="Hamilton C."/>
            <person name="Henderson N."/>
            <person name="Hernandez O."/>
            <person name="Hines S."/>
            <person name="Hogues M.E."/>
            <person name="Huang M."/>
            <person name="Idlebird D.G."/>
            <person name="Johnson R."/>
            <person name="Jolivet A."/>
            <person name="Jones S."/>
            <person name="Kagan R."/>
            <person name="King L.M."/>
            <person name="Leal B."/>
            <person name="Lebow H."/>
            <person name="Lee S."/>
            <person name="LeVan J.M."/>
            <person name="Lewis L.C."/>
            <person name="London P."/>
            <person name="Lorensuhewa L.M."/>
            <person name="Loulseged H."/>
            <person name="Lovett D.A."/>
            <person name="Lucier A."/>
            <person name="Lucier R.L."/>
            <person name="Ma J."/>
            <person name="Madu R.C."/>
            <person name="Mapua P."/>
            <person name="Martindale A.D."/>
            <person name="Martinez E."/>
            <person name="Massey E."/>
            <person name="Mawhiney S."/>
            <person name="Meador M.G."/>
            <person name="Mendez S."/>
            <person name="Mercado C."/>
            <person name="Mercado I.C."/>
            <person name="Merritt C.E."/>
            <person name="Miner Z.L."/>
            <person name="Minja E."/>
            <person name="Mitchell T."/>
            <person name="Mohabbat F."/>
            <person name="Mohabbat K."/>
            <person name="Montgomery B."/>
            <person name="Moore N."/>
            <person name="Morris S."/>
            <person name="Munidasa M."/>
            <person name="Ngo R.N."/>
            <person name="Nguyen N.B."/>
            <person name="Nickerson E."/>
            <person name="Nwaokelemeh O.O."/>
            <person name="Nwokenkwo S."/>
            <person name="Obregon M."/>
            <person name="Oguh M."/>
            <person name="Oragunye N."/>
            <person name="Oviedo R.J."/>
            <person name="Parish B.J."/>
            <person name="Parker D.N."/>
            <person name="Parrish J."/>
            <person name="Parks K.L."/>
            <person name="Paul H.A."/>
            <person name="Payton B.A."/>
            <person name="Perez A."/>
            <person name="Perrin W."/>
            <person name="Pickens A."/>
            <person name="Primus E.L."/>
            <person name="Pu L.-L."/>
            <person name="Puazo M."/>
            <person name="Quiles M.M."/>
            <person name="Quiroz J.B."/>
            <person name="Rabata D."/>
            <person name="Reeves K."/>
            <person name="Ruiz S.J."/>
            <person name="Shao H."/>
            <person name="Sisson I."/>
            <person name="Sonaike T."/>
            <person name="Sorelle R.P."/>
            <person name="Sutton A.E."/>
            <person name="Svatek A.F."/>
            <person name="Svetz L.A."/>
            <person name="Tamerisa K.S."/>
            <person name="Taylor T.R."/>
            <person name="Teague B."/>
            <person name="Thomas N."/>
            <person name="Thorn R.D."/>
            <person name="Trejos Z.Y."/>
            <person name="Trevino B.K."/>
            <person name="Ukegbu O.N."/>
            <person name="Urban J.B."/>
            <person name="Vasquez L.I."/>
            <person name="Vera V.A."/>
            <person name="Villasana D.M."/>
            <person name="Wang L."/>
            <person name="Ward-Moore S."/>
            <person name="Warren J.T."/>
            <person name="Wei X."/>
            <person name="White F."/>
            <person name="Williamson A.L."/>
            <person name="Wleczyk R."/>
            <person name="Wooden H.S."/>
            <person name="Wooden S.H."/>
            <person name="Yen J."/>
            <person name="Yoon L."/>
            <person name="Yoon V."/>
            <person name="Zorrilla S.E."/>
            <person name="Nelson D."/>
            <person name="Kucherlapati R."/>
            <person name="Weinstock G."/>
            <person name="Gibbs R.A."/>
        </authorList>
    </citation>
    <scope>NUCLEOTIDE SEQUENCE [LARGE SCALE GENOMIC DNA]</scope>
</reference>
<reference key="2">
    <citation type="submission" date="2005-07" db="EMBL/GenBank/DDBJ databases">
        <authorList>
            <person name="Mural R.J."/>
            <person name="Istrail S."/>
            <person name="Sutton G.G."/>
            <person name="Florea L."/>
            <person name="Halpern A.L."/>
            <person name="Mobarry C.M."/>
            <person name="Lippert R."/>
            <person name="Walenz B."/>
            <person name="Shatkay H."/>
            <person name="Dew I."/>
            <person name="Miller J.R."/>
            <person name="Flanigan M.J."/>
            <person name="Edwards N.J."/>
            <person name="Bolanos R."/>
            <person name="Fasulo D."/>
            <person name="Halldorsson B.V."/>
            <person name="Hannenhalli S."/>
            <person name="Turner R."/>
            <person name="Yooseph S."/>
            <person name="Lu F."/>
            <person name="Nusskern D.R."/>
            <person name="Shue B.C."/>
            <person name="Zheng X.H."/>
            <person name="Zhong F."/>
            <person name="Delcher A.L."/>
            <person name="Huson D.H."/>
            <person name="Kravitz S.A."/>
            <person name="Mouchard L."/>
            <person name="Reinert K."/>
            <person name="Remington K.A."/>
            <person name="Clark A.G."/>
            <person name="Waterman M.S."/>
            <person name="Eichler E.E."/>
            <person name="Adams M.D."/>
            <person name="Hunkapiller M.W."/>
            <person name="Myers E.W."/>
            <person name="Venter J.C."/>
        </authorList>
    </citation>
    <scope>NUCLEOTIDE SEQUENCE [LARGE SCALE GENOMIC DNA]</scope>
</reference>
<dbReference type="EMBL" id="AC122685">
    <property type="status" value="NOT_ANNOTATED_CDS"/>
    <property type="molecule type" value="Genomic_DNA"/>
</dbReference>
<dbReference type="EMBL" id="CH471054">
    <property type="protein sequence ID" value="EAW96814.1"/>
    <property type="status" value="ALT_INIT"/>
    <property type="molecule type" value="Genomic_DNA"/>
</dbReference>
<dbReference type="CCDS" id="CCDS31826.2"/>
<dbReference type="RefSeq" id="NP_001005519.2">
    <property type="nucleotide sequence ID" value="NM_001005519.2"/>
</dbReference>
<dbReference type="SMR" id="A6NDL8"/>
<dbReference type="FunCoup" id="A6NDL8">
    <property type="interactions" value="416"/>
</dbReference>
<dbReference type="STRING" id="9606.ENSP00000448811"/>
<dbReference type="iPTMnet" id="A6NDL8"/>
<dbReference type="PhosphoSitePlus" id="A6NDL8"/>
<dbReference type="BioMuta" id="OR6C68"/>
<dbReference type="jPOST" id="A6NDL8"/>
<dbReference type="PaxDb" id="9606-ENSP00000448811"/>
<dbReference type="ProteomicsDB" id="917"/>
<dbReference type="Antibodypedia" id="43603">
    <property type="antibodies" value="66 antibodies from 20 providers"/>
</dbReference>
<dbReference type="DNASU" id="403284"/>
<dbReference type="Ensembl" id="ENST00000548615.1">
    <property type="protein sequence ID" value="ENSP00000448811.1"/>
    <property type="gene ID" value="ENSG00000205327.3"/>
</dbReference>
<dbReference type="GeneID" id="403284"/>
<dbReference type="KEGG" id="hsa:403284"/>
<dbReference type="MANE-Select" id="ENST00000548615.1">
    <property type="protein sequence ID" value="ENSP00000448811.1"/>
    <property type="RefSeq nucleotide sequence ID" value="NM_001005519.2"/>
    <property type="RefSeq protein sequence ID" value="NP_001005519.2"/>
</dbReference>
<dbReference type="UCSC" id="uc031qhq.1">
    <property type="organism name" value="human"/>
</dbReference>
<dbReference type="AGR" id="HGNC:31297"/>
<dbReference type="CTD" id="403284"/>
<dbReference type="DisGeNET" id="403284"/>
<dbReference type="GeneCards" id="OR6C68"/>
<dbReference type="HGNC" id="HGNC:31297">
    <property type="gene designation" value="OR6C68"/>
</dbReference>
<dbReference type="HPA" id="ENSG00000205327">
    <property type="expression patterns" value="Not detected"/>
</dbReference>
<dbReference type="neXtProt" id="NX_A6NDL8"/>
<dbReference type="PharmGKB" id="PA134911831"/>
<dbReference type="VEuPathDB" id="HostDB:ENSG00000205327"/>
<dbReference type="eggNOG" id="ENOG502T9MW">
    <property type="taxonomic scope" value="Eukaryota"/>
</dbReference>
<dbReference type="GeneTree" id="ENSGT01130000278306"/>
<dbReference type="HOGENOM" id="CLU_012526_1_1_1"/>
<dbReference type="InParanoid" id="A6NDL8"/>
<dbReference type="OMA" id="MAIMSNK"/>
<dbReference type="OrthoDB" id="9709639at2759"/>
<dbReference type="PAN-GO" id="A6NDL8">
    <property type="GO annotations" value="1 GO annotation based on evolutionary models"/>
</dbReference>
<dbReference type="PhylomeDB" id="A6NDL8"/>
<dbReference type="TreeFam" id="TF336833"/>
<dbReference type="PathwayCommons" id="A6NDL8"/>
<dbReference type="Reactome" id="R-HSA-9752946">
    <property type="pathway name" value="Expression and translocation of olfactory receptors"/>
</dbReference>
<dbReference type="SignaLink" id="A6NDL8"/>
<dbReference type="BioGRID-ORCS" id="403284">
    <property type="hits" value="10 hits in 734 CRISPR screens"/>
</dbReference>
<dbReference type="GenomeRNAi" id="403284"/>
<dbReference type="Pharos" id="A6NDL8">
    <property type="development level" value="Tdark"/>
</dbReference>
<dbReference type="PRO" id="PR:A6NDL8"/>
<dbReference type="Proteomes" id="UP000005640">
    <property type="component" value="Chromosome 12"/>
</dbReference>
<dbReference type="RNAct" id="A6NDL8">
    <property type="molecule type" value="protein"/>
</dbReference>
<dbReference type="Bgee" id="ENSG00000205327">
    <property type="expression patterns" value="Expressed in right atrium auricular region"/>
</dbReference>
<dbReference type="GO" id="GO:0005886">
    <property type="term" value="C:plasma membrane"/>
    <property type="evidence" value="ECO:0007669"/>
    <property type="project" value="UniProtKB-SubCell"/>
</dbReference>
<dbReference type="GO" id="GO:0004930">
    <property type="term" value="F:G protein-coupled receptor activity"/>
    <property type="evidence" value="ECO:0007669"/>
    <property type="project" value="UniProtKB-KW"/>
</dbReference>
<dbReference type="GO" id="GO:0004984">
    <property type="term" value="F:olfactory receptor activity"/>
    <property type="evidence" value="ECO:0000318"/>
    <property type="project" value="GO_Central"/>
</dbReference>
<dbReference type="CDD" id="cd15912">
    <property type="entry name" value="7tmA_OR6C-like"/>
    <property type="match status" value="1"/>
</dbReference>
<dbReference type="FunFam" id="1.20.1070.10:FF:000013">
    <property type="entry name" value="Olfactory receptor"/>
    <property type="match status" value="1"/>
</dbReference>
<dbReference type="Gene3D" id="1.20.1070.10">
    <property type="entry name" value="Rhodopsin 7-helix transmembrane proteins"/>
    <property type="match status" value="1"/>
</dbReference>
<dbReference type="InterPro" id="IPR000276">
    <property type="entry name" value="GPCR_Rhodpsn"/>
</dbReference>
<dbReference type="InterPro" id="IPR017452">
    <property type="entry name" value="GPCR_Rhodpsn_7TM"/>
</dbReference>
<dbReference type="InterPro" id="IPR000725">
    <property type="entry name" value="Olfact_rcpt"/>
</dbReference>
<dbReference type="InterPro" id="IPR047132">
    <property type="entry name" value="Olfact_rcpt_6C-like"/>
</dbReference>
<dbReference type="PANTHER" id="PTHR26454">
    <property type="entry name" value="OLFACTORY RECEPTOR"/>
    <property type="match status" value="1"/>
</dbReference>
<dbReference type="PANTHER" id="PTHR26454:SF19">
    <property type="entry name" value="OLFACTORY RECEPTOR 6C68"/>
    <property type="match status" value="1"/>
</dbReference>
<dbReference type="Pfam" id="PF13853">
    <property type="entry name" value="7tm_4"/>
    <property type="match status" value="1"/>
</dbReference>
<dbReference type="PRINTS" id="PR00237">
    <property type="entry name" value="GPCRRHODOPSN"/>
</dbReference>
<dbReference type="PRINTS" id="PR00245">
    <property type="entry name" value="OLFACTORYR"/>
</dbReference>
<dbReference type="SUPFAM" id="SSF81321">
    <property type="entry name" value="Family A G protein-coupled receptor-like"/>
    <property type="match status" value="1"/>
</dbReference>
<dbReference type="PROSITE" id="PS00237">
    <property type="entry name" value="G_PROTEIN_RECEP_F1_1"/>
    <property type="match status" value="1"/>
</dbReference>
<dbReference type="PROSITE" id="PS50262">
    <property type="entry name" value="G_PROTEIN_RECEP_F1_2"/>
    <property type="match status" value="1"/>
</dbReference>
<name>O6C68_HUMAN</name>